<gene>
    <name type="primary">isdE</name>
    <name type="synonym">sirF</name>
    <name type="ordered locus">SAB0997</name>
</gene>
<proteinExistence type="inferred from homology"/>
<evidence type="ECO:0000250" key="1"/>
<evidence type="ECO:0000255" key="2">
    <source>
        <dbReference type="PROSITE-ProRule" id="PRU00303"/>
    </source>
</evidence>
<evidence type="ECO:0000255" key="3">
    <source>
        <dbReference type="PROSITE-ProRule" id="PRU00344"/>
    </source>
</evidence>
<evidence type="ECO:0000305" key="4"/>
<comment type="function">
    <text evidence="1">Involved in heme (porphyrin) scavenging. Binds Fe(2+) and Fe(3+) heme but the largest fraction is Fe(2+) heme. Functions as a high-affinity heme binding protein and probably has a role in relaying heme-iron from cell wall-anchored isd proteins receptors to the probable permease IsdF (By similarity).</text>
</comment>
<comment type="cofactor">
    <cofactor evidence="1">
        <name>heme b</name>
        <dbReference type="ChEBI" id="CHEBI:60344"/>
    </cofactor>
    <text evidence="1">Binds 1 heme b (iron(II)-protoporphyrin IX) group per subunit.</text>
</comment>
<comment type="subcellular location">
    <subcellularLocation>
        <location evidence="2">Cell membrane</location>
        <topology evidence="2">Lipid-anchor</topology>
    </subcellularLocation>
</comment>
<comment type="induction">
    <text evidence="1">Repressed by fur in the presence of iron.</text>
</comment>
<comment type="similarity">
    <text evidence="4">Belongs to the bacterial solute-binding protein 8 family.</text>
</comment>
<organism>
    <name type="scientific">Staphylococcus aureus (strain bovine RF122 / ET3-1)</name>
    <dbReference type="NCBI Taxonomy" id="273036"/>
    <lineage>
        <taxon>Bacteria</taxon>
        <taxon>Bacillati</taxon>
        <taxon>Bacillota</taxon>
        <taxon>Bacilli</taxon>
        <taxon>Bacillales</taxon>
        <taxon>Staphylococcaceae</taxon>
        <taxon>Staphylococcus</taxon>
    </lineage>
</organism>
<dbReference type="EMBL" id="AJ938182">
    <property type="protein sequence ID" value="CAI80685.1"/>
    <property type="molecule type" value="Genomic_DNA"/>
</dbReference>
<dbReference type="RefSeq" id="WP_001220205.1">
    <property type="nucleotide sequence ID" value="NC_007622.1"/>
</dbReference>
<dbReference type="SMR" id="Q2YX92"/>
<dbReference type="KEGG" id="sab:SAB0997"/>
<dbReference type="HOGENOM" id="CLU_038034_2_3_9"/>
<dbReference type="GO" id="GO:0005886">
    <property type="term" value="C:plasma membrane"/>
    <property type="evidence" value="ECO:0007669"/>
    <property type="project" value="UniProtKB-SubCell"/>
</dbReference>
<dbReference type="GO" id="GO:0020037">
    <property type="term" value="F:heme binding"/>
    <property type="evidence" value="ECO:0007669"/>
    <property type="project" value="InterPro"/>
</dbReference>
<dbReference type="GO" id="GO:0046872">
    <property type="term" value="F:metal ion binding"/>
    <property type="evidence" value="ECO:0007669"/>
    <property type="project" value="UniProtKB-KW"/>
</dbReference>
<dbReference type="GO" id="GO:0071281">
    <property type="term" value="P:cellular response to iron ion"/>
    <property type="evidence" value="ECO:0007669"/>
    <property type="project" value="TreeGrafter"/>
</dbReference>
<dbReference type="GO" id="GO:0015886">
    <property type="term" value="P:heme transport"/>
    <property type="evidence" value="ECO:0007669"/>
    <property type="project" value="InterPro"/>
</dbReference>
<dbReference type="FunFam" id="3.40.50.1980:FF:000022">
    <property type="entry name" value="Heme ABC transporter substrate-binding protein IsdE"/>
    <property type="match status" value="1"/>
</dbReference>
<dbReference type="FunFam" id="3.40.50.1980:FF:000031">
    <property type="entry name" value="High-affinity heme uptake system protein IsdE"/>
    <property type="match status" value="1"/>
</dbReference>
<dbReference type="Gene3D" id="3.40.50.1980">
    <property type="entry name" value="Nitrogenase molybdenum iron protein domain"/>
    <property type="match status" value="2"/>
</dbReference>
<dbReference type="InterPro" id="IPR050902">
    <property type="entry name" value="ABC_Transporter_SBP"/>
</dbReference>
<dbReference type="InterPro" id="IPR019957">
    <property type="entry name" value="ABC_transptr_haem-bd_IsdE"/>
</dbReference>
<dbReference type="InterPro" id="IPR002491">
    <property type="entry name" value="ABC_transptr_periplasmic_BD"/>
</dbReference>
<dbReference type="NCBIfam" id="TIGR03659">
    <property type="entry name" value="IsdE"/>
    <property type="match status" value="1"/>
</dbReference>
<dbReference type="PANTHER" id="PTHR30535:SF36">
    <property type="entry name" value="HIGH-AFFINITY HEME UPTAKE SYSTEM PROTEIN ISDE"/>
    <property type="match status" value="1"/>
</dbReference>
<dbReference type="PANTHER" id="PTHR30535">
    <property type="entry name" value="VITAMIN B12-BINDING PROTEIN"/>
    <property type="match status" value="1"/>
</dbReference>
<dbReference type="Pfam" id="PF01497">
    <property type="entry name" value="Peripla_BP_2"/>
    <property type="match status" value="1"/>
</dbReference>
<dbReference type="SUPFAM" id="SSF53807">
    <property type="entry name" value="Helical backbone' metal receptor"/>
    <property type="match status" value="1"/>
</dbReference>
<dbReference type="PROSITE" id="PS50983">
    <property type="entry name" value="FE_B12_PBP"/>
    <property type="match status" value="1"/>
</dbReference>
<dbReference type="PROSITE" id="PS51257">
    <property type="entry name" value="PROKAR_LIPOPROTEIN"/>
    <property type="match status" value="1"/>
</dbReference>
<reference key="1">
    <citation type="journal article" date="2007" name="PLoS ONE">
        <title>Molecular correlates of host specialization in Staphylococcus aureus.</title>
        <authorList>
            <person name="Herron-Olson L."/>
            <person name="Fitzgerald J.R."/>
            <person name="Musser J.M."/>
            <person name="Kapur V."/>
        </authorList>
    </citation>
    <scope>NUCLEOTIDE SEQUENCE [LARGE SCALE GENOMIC DNA]</scope>
    <source>
        <strain>bovine RF122 / ET3-1</strain>
    </source>
</reference>
<keyword id="KW-1003">Cell membrane</keyword>
<keyword id="KW-0349">Heme</keyword>
<keyword id="KW-0408">Iron</keyword>
<keyword id="KW-0449">Lipoprotein</keyword>
<keyword id="KW-0472">Membrane</keyword>
<keyword id="KW-0479">Metal-binding</keyword>
<keyword id="KW-0564">Palmitate</keyword>
<keyword id="KW-0732">Signal</keyword>
<keyword id="KW-0813">Transport</keyword>
<protein>
    <recommendedName>
        <fullName>High-affinity heme uptake system protein IsdE</fullName>
    </recommendedName>
    <alternativeName>
        <fullName>Iron-regulated surface determinant protein E</fullName>
    </alternativeName>
    <alternativeName>
        <fullName>Staphylococcal iron-regulated protein F</fullName>
    </alternativeName>
</protein>
<sequence length="292" mass="33299">MRIIKYLTILVISVVILTSCQSSSSQESTKSGEFRIVPTTVALTMTLDKLDLPIVGKPTSYKTLPNRYKDVPEIGQPMEPNVEAVKKLKPTHVLSVSTIKDEMQPFYKQLNMKGYFYDFDSLKGMQKSITQLGDQFNRKAQAKELNDHLNSVKQKIENKAVKQKKHPKVLILMGVPGSYLVATDKSYIGDLVKIAGGENVIKVKDRQYISSNTENLLNINPDIILRLPHGMPEEVKKMFQKEFKQNDIWKHFKAVKNNHVYDLEEVPFGITANVDADKAMTQLYDLFYKDKK</sequence>
<feature type="signal peptide" evidence="2">
    <location>
        <begin position="1"/>
        <end position="19"/>
    </location>
</feature>
<feature type="chain" id="PRO_0000326207" description="High-affinity heme uptake system protein IsdE">
    <location>
        <begin position="20"/>
        <end position="292"/>
    </location>
</feature>
<feature type="domain" description="Fe/B12 periplasmic-binding" evidence="3">
    <location>
        <begin position="35"/>
        <end position="291"/>
    </location>
</feature>
<feature type="binding site" evidence="1">
    <location>
        <position position="41"/>
    </location>
    <ligand>
        <name>heme</name>
        <dbReference type="ChEBI" id="CHEBI:30413"/>
    </ligand>
</feature>
<feature type="binding site" evidence="1">
    <location>
        <position position="42"/>
    </location>
    <ligand>
        <name>heme</name>
        <dbReference type="ChEBI" id="CHEBI:30413"/>
    </ligand>
</feature>
<feature type="binding site" evidence="1">
    <location>
        <position position="60"/>
    </location>
    <ligand>
        <name>heme</name>
        <dbReference type="ChEBI" id="CHEBI:30413"/>
    </ligand>
</feature>
<feature type="binding site" evidence="1">
    <location>
        <position position="61"/>
    </location>
    <ligand>
        <name>heme</name>
        <dbReference type="ChEBI" id="CHEBI:30413"/>
    </ligand>
</feature>
<feature type="binding site" description="axial binding residue" evidence="1">
    <location>
        <position position="78"/>
    </location>
    <ligand>
        <name>heme</name>
        <dbReference type="ChEBI" id="CHEBI:30413"/>
    </ligand>
    <ligandPart>
        <name>Fe</name>
        <dbReference type="ChEBI" id="CHEBI:18248"/>
    </ligandPart>
</feature>
<feature type="binding site" description="axial binding residue" evidence="1">
    <location>
        <position position="229"/>
    </location>
    <ligand>
        <name>heme</name>
        <dbReference type="ChEBI" id="CHEBI:30413"/>
    </ligand>
    <ligandPart>
        <name>Fe</name>
        <dbReference type="ChEBI" id="CHEBI:18248"/>
    </ligandPart>
</feature>
<feature type="lipid moiety-binding region" description="N-palmitoyl cysteine" evidence="2">
    <location>
        <position position="20"/>
    </location>
</feature>
<feature type="lipid moiety-binding region" description="S-diacylglycerol cysteine" evidence="2">
    <location>
        <position position="20"/>
    </location>
</feature>
<name>ISDE_STAAB</name>
<accession>Q2YX92</accession>